<keyword id="KW-0067">ATP-binding</keyword>
<keyword id="KW-0436">Ligase</keyword>
<keyword id="KW-0460">Magnesium</keyword>
<keyword id="KW-0479">Metal-binding</keyword>
<keyword id="KW-0547">Nucleotide-binding</keyword>
<keyword id="KW-0833">Ubl conjugation pathway</keyword>
<dbReference type="EC" id="6.3.1.19" evidence="1"/>
<dbReference type="EMBL" id="CP000511">
    <property type="protein sequence ID" value="ABM14240.1"/>
    <property type="status" value="ALT_INIT"/>
    <property type="molecule type" value="Genomic_DNA"/>
</dbReference>
<dbReference type="SMR" id="A1TAP0"/>
<dbReference type="STRING" id="350058.Mvan_3445"/>
<dbReference type="KEGG" id="mva:Mvan_3445"/>
<dbReference type="eggNOG" id="COG0638">
    <property type="taxonomic scope" value="Bacteria"/>
</dbReference>
<dbReference type="HOGENOM" id="CLU_040524_0_1_11"/>
<dbReference type="UniPathway" id="UPA00997"/>
<dbReference type="UniPathway" id="UPA00998"/>
<dbReference type="Proteomes" id="UP000009159">
    <property type="component" value="Chromosome"/>
</dbReference>
<dbReference type="GO" id="GO:0005524">
    <property type="term" value="F:ATP binding"/>
    <property type="evidence" value="ECO:0007669"/>
    <property type="project" value="UniProtKB-UniRule"/>
</dbReference>
<dbReference type="GO" id="GO:0016879">
    <property type="term" value="F:ligase activity, forming carbon-nitrogen bonds"/>
    <property type="evidence" value="ECO:0007669"/>
    <property type="project" value="InterPro"/>
</dbReference>
<dbReference type="GO" id="GO:0000287">
    <property type="term" value="F:magnesium ion binding"/>
    <property type="evidence" value="ECO:0007669"/>
    <property type="project" value="UniProtKB-UniRule"/>
</dbReference>
<dbReference type="GO" id="GO:0019787">
    <property type="term" value="F:ubiquitin-like protein transferase activity"/>
    <property type="evidence" value="ECO:0007669"/>
    <property type="project" value="UniProtKB-UniRule"/>
</dbReference>
<dbReference type="GO" id="GO:0019941">
    <property type="term" value="P:modification-dependent protein catabolic process"/>
    <property type="evidence" value="ECO:0007669"/>
    <property type="project" value="UniProtKB-UniRule"/>
</dbReference>
<dbReference type="GO" id="GO:0010498">
    <property type="term" value="P:proteasomal protein catabolic process"/>
    <property type="evidence" value="ECO:0007669"/>
    <property type="project" value="UniProtKB-UniRule"/>
</dbReference>
<dbReference type="GO" id="GO:0070490">
    <property type="term" value="P:protein pupylation"/>
    <property type="evidence" value="ECO:0007669"/>
    <property type="project" value="UniProtKB-UniRule"/>
</dbReference>
<dbReference type="HAMAP" id="MF_02111">
    <property type="entry name" value="Pup_ligase"/>
    <property type="match status" value="1"/>
</dbReference>
<dbReference type="InterPro" id="IPR022279">
    <property type="entry name" value="Pup_ligase"/>
</dbReference>
<dbReference type="InterPro" id="IPR004347">
    <property type="entry name" value="Pup_ligase/deamidase"/>
</dbReference>
<dbReference type="NCBIfam" id="TIGR03686">
    <property type="entry name" value="pupylate_PafA"/>
    <property type="match status" value="1"/>
</dbReference>
<dbReference type="PANTHER" id="PTHR42307">
    <property type="entry name" value="PUP DEAMIDASE/DEPUPYLASE"/>
    <property type="match status" value="1"/>
</dbReference>
<dbReference type="PANTHER" id="PTHR42307:SF3">
    <property type="entry name" value="PUP--PROTEIN LIGASE"/>
    <property type="match status" value="1"/>
</dbReference>
<dbReference type="Pfam" id="PF03136">
    <property type="entry name" value="Pup_ligase"/>
    <property type="match status" value="1"/>
</dbReference>
<dbReference type="PIRSF" id="PIRSF018077">
    <property type="entry name" value="UCP018077"/>
    <property type="match status" value="1"/>
</dbReference>
<proteinExistence type="inferred from homology"/>
<organism>
    <name type="scientific">Mycolicibacterium vanbaalenii (strain DSM 7251 / JCM 13017 / BCRC 16820 / KCTC 9966 / NRRL B-24157 / PYR-1)</name>
    <name type="common">Mycobacterium vanbaalenii</name>
    <dbReference type="NCBI Taxonomy" id="350058"/>
    <lineage>
        <taxon>Bacteria</taxon>
        <taxon>Bacillati</taxon>
        <taxon>Actinomycetota</taxon>
        <taxon>Actinomycetes</taxon>
        <taxon>Mycobacteriales</taxon>
        <taxon>Mycobacteriaceae</taxon>
        <taxon>Mycolicibacterium</taxon>
    </lineage>
</organism>
<gene>
    <name evidence="1" type="primary">pafA</name>
    <name type="ordered locus">Mvan_3445</name>
</gene>
<comment type="function">
    <text evidence="1">Catalyzes the covalent attachment of the prokaryotic ubiquitin-like protein modifier Pup to the proteasomal substrate proteins, thereby targeting them for proteasomal degradation. This tagging system is termed pupylation. The ligation reaction involves the side-chain carboxylate of the C-terminal glutamate of Pup and the side-chain amino group of a substrate lysine.</text>
</comment>
<comment type="catalytic activity">
    <reaction evidence="1">
        <text>ATP + [prokaryotic ubiquitin-like protein]-L-glutamate + [protein]-L-lysine = ADP + phosphate + N(6)-([prokaryotic ubiquitin-like protein]-gamma-L-glutamyl)-[protein]-L-lysine.</text>
        <dbReference type="EC" id="6.3.1.19"/>
    </reaction>
</comment>
<comment type="pathway">
    <text evidence="1">Protein degradation; proteasomal Pup-dependent pathway.</text>
</comment>
<comment type="pathway">
    <text evidence="1">Protein modification; protein pupylation.</text>
</comment>
<comment type="miscellaneous">
    <text evidence="1">The reaction mechanism probably proceeds via the activation of Pup by phosphorylation of its C-terminal glutamate, which is then subject to nucleophilic attack by the substrate lysine, resulting in an isopeptide bond and the release of phosphate as a good leaving group.</text>
</comment>
<comment type="similarity">
    <text evidence="1">Belongs to the Pup ligase/Pup deamidase family. Pup-conjugating enzyme subfamily.</text>
</comment>
<comment type="sequence caution" evidence="2">
    <conflict type="erroneous initiation">
        <sequence resource="EMBL-CDS" id="ABM14240"/>
    </conflict>
    <text>Extended N-terminus.</text>
</comment>
<evidence type="ECO:0000255" key="1">
    <source>
        <dbReference type="HAMAP-Rule" id="MF_02111"/>
    </source>
</evidence>
<evidence type="ECO:0000305" key="2"/>
<reference key="1">
    <citation type="submission" date="2006-12" db="EMBL/GenBank/DDBJ databases">
        <title>Complete sequence of Mycobacterium vanbaalenii PYR-1.</title>
        <authorList>
            <consortium name="US DOE Joint Genome Institute"/>
            <person name="Copeland A."/>
            <person name="Lucas S."/>
            <person name="Lapidus A."/>
            <person name="Barry K."/>
            <person name="Detter J.C."/>
            <person name="Glavina del Rio T."/>
            <person name="Hammon N."/>
            <person name="Israni S."/>
            <person name="Dalin E."/>
            <person name="Tice H."/>
            <person name="Pitluck S."/>
            <person name="Singan V."/>
            <person name="Schmutz J."/>
            <person name="Larimer F."/>
            <person name="Land M."/>
            <person name="Hauser L."/>
            <person name="Kyrpides N."/>
            <person name="Anderson I.J."/>
            <person name="Miller C."/>
            <person name="Richardson P."/>
        </authorList>
    </citation>
    <scope>NUCLEOTIDE SEQUENCE [LARGE SCALE GENOMIC DNA]</scope>
    <source>
        <strain>DSM 7251 / JCM 13017 / BCRC 16820 / KCTC 9966 / NRRL B-24157 / PYR-1</strain>
    </source>
</reference>
<name>PAFA_MYCVP</name>
<accession>A1TAP0</accession>
<feature type="chain" id="PRO_0000395939" description="Pup--protein ligase">
    <location>
        <begin position="1"/>
        <end position="452"/>
    </location>
</feature>
<feature type="active site" description="Proton acceptor" evidence="1">
    <location>
        <position position="57"/>
    </location>
</feature>
<feature type="binding site" evidence="1">
    <location>
        <position position="9"/>
    </location>
    <ligand>
        <name>Mg(2+)</name>
        <dbReference type="ChEBI" id="CHEBI:18420"/>
    </ligand>
</feature>
<feature type="binding site" evidence="1">
    <location>
        <position position="53"/>
    </location>
    <ligand>
        <name>ATP</name>
        <dbReference type="ChEBI" id="CHEBI:30616"/>
    </ligand>
</feature>
<feature type="binding site" evidence="1">
    <location>
        <position position="55"/>
    </location>
    <ligand>
        <name>Mg(2+)</name>
        <dbReference type="ChEBI" id="CHEBI:18420"/>
    </ligand>
</feature>
<feature type="binding site" evidence="1">
    <location>
        <position position="63"/>
    </location>
    <ligand>
        <name>Mg(2+)</name>
        <dbReference type="ChEBI" id="CHEBI:18420"/>
    </ligand>
</feature>
<feature type="binding site" evidence="1">
    <location>
        <position position="66"/>
    </location>
    <ligand>
        <name>ATP</name>
        <dbReference type="ChEBI" id="CHEBI:30616"/>
    </ligand>
</feature>
<feature type="binding site" evidence="1">
    <location>
        <position position="419"/>
    </location>
    <ligand>
        <name>ATP</name>
        <dbReference type="ChEBI" id="CHEBI:30616"/>
    </ligand>
</feature>
<sequence>MQRRIMGIETEFGVTCTFHGHRRLSPDEVARYLFRRVVSWGRSSNVFLRNGARLYLDVGSHPEYATAECDSLTQLVTHDRAGERVLEDLLIDAEQRLADEGIGGDIYLFKNNTDSAGNSYGCHENYLIVRAGEFSRISDVLLPFLVTRQLICGAGKVLQTPKAATFCLSQRAEHIWEGVSSATTRSRPIINTRDEPHADAEKYRRLHVIVGDSNMSESTTMLKVGSASLVLEMIEAGVAFRDFSLDNPIRAIREVSHDLTGRRPVRLAGGRQASALDIQREYYARAVEYLQTREPNTQIEQVVDLWGRQLDAVESQDFAKVDTEIDWVIKRKLFQRYQDRYNMELSDPKISQLDLAYHDIKRGRGVFDLLQRKGLAARITTDEEIEAAVNTPPQTTRAKLRGEFISAAQEAGRDFTVDWVHLKLNDQAQRTVLCKDPFRSVDERVKRLIASM</sequence>
<protein>
    <recommendedName>
        <fullName evidence="1">Pup--protein ligase</fullName>
        <ecNumber evidence="1">6.3.1.19</ecNumber>
    </recommendedName>
    <alternativeName>
        <fullName evidence="1">Proteasome accessory factor A</fullName>
    </alternativeName>
    <alternativeName>
        <fullName evidence="1">Pup-conjugating enzyme</fullName>
    </alternativeName>
</protein>